<keyword id="KW-0460">Magnesium</keyword>
<keyword id="KW-0479">Metal-binding</keyword>
<keyword id="KW-0520">NAD</keyword>
<keyword id="KW-0547">Nucleotide-binding</keyword>
<keyword id="KW-0560">Oxidoreductase</keyword>
<keyword id="KW-1185">Reference proteome</keyword>
<keyword id="KW-0964">Secreted</keyword>
<comment type="function">
    <text evidence="1">Catalyzes the reversible reductive amination of pyruvate to L-alanine. However, since the physiological environment of M.tuberculosis has a neutral pH, it can be assumed that the enzyme catalyzes exclusively the formation of L-alanine. May play a role in cell wall synthesis as L-alanine is an important constituent of the peptidoglycan layer (By similarity).</text>
</comment>
<comment type="catalytic activity">
    <reaction>
        <text>L-alanine + NAD(+) + H2O = pyruvate + NH4(+) + NADH + H(+)</text>
        <dbReference type="Rhea" id="RHEA:18405"/>
        <dbReference type="ChEBI" id="CHEBI:15361"/>
        <dbReference type="ChEBI" id="CHEBI:15377"/>
        <dbReference type="ChEBI" id="CHEBI:15378"/>
        <dbReference type="ChEBI" id="CHEBI:28938"/>
        <dbReference type="ChEBI" id="CHEBI:57540"/>
        <dbReference type="ChEBI" id="CHEBI:57945"/>
        <dbReference type="ChEBI" id="CHEBI:57972"/>
        <dbReference type="EC" id="1.4.1.1"/>
    </reaction>
</comment>
<comment type="cofactor">
    <cofactor evidence="2">
        <name>Mg(2+)</name>
        <dbReference type="ChEBI" id="CHEBI:18420"/>
    </cofactor>
    <text evidence="2">Binds 1 Mg(2+) ion per subunit.</text>
</comment>
<comment type="pathway">
    <text>Amino-acid degradation; L-alanine degradation via dehydrogenase pathway; NH(3) and pyruvate from L-alanine: step 1/1.</text>
</comment>
<comment type="subunit">
    <text evidence="1">Homohexamer. Trimer of dimers (By similarity).</text>
</comment>
<comment type="subcellular location">
    <subcellularLocation>
        <location evidence="1">Secreted</location>
    </subcellularLocation>
</comment>
<comment type="similarity">
    <text evidence="3">Belongs to the AlaDH/PNT family.</text>
</comment>
<dbReference type="EC" id="1.4.1.1"/>
<dbReference type="EMBL" id="AE000516">
    <property type="protein sequence ID" value="AAK47169.1"/>
    <property type="molecule type" value="Genomic_DNA"/>
</dbReference>
<dbReference type="PIR" id="C70883">
    <property type="entry name" value="A43830"/>
</dbReference>
<dbReference type="RefSeq" id="WP_010924575.1">
    <property type="nucleotide sequence ID" value="NC_002755.2"/>
</dbReference>
<dbReference type="SMR" id="P9WQB0"/>
<dbReference type="KEGG" id="mtc:MT2850"/>
<dbReference type="HOGENOM" id="CLU_003376_3_0_11"/>
<dbReference type="UniPathway" id="UPA00527">
    <property type="reaction ID" value="UER00585"/>
</dbReference>
<dbReference type="Proteomes" id="UP000001020">
    <property type="component" value="Chromosome"/>
</dbReference>
<dbReference type="GO" id="GO:0005576">
    <property type="term" value="C:extracellular region"/>
    <property type="evidence" value="ECO:0007669"/>
    <property type="project" value="UniProtKB-SubCell"/>
</dbReference>
<dbReference type="GO" id="GO:0005886">
    <property type="term" value="C:plasma membrane"/>
    <property type="evidence" value="ECO:0007669"/>
    <property type="project" value="TreeGrafter"/>
</dbReference>
<dbReference type="GO" id="GO:0000286">
    <property type="term" value="F:alanine dehydrogenase activity"/>
    <property type="evidence" value="ECO:0007669"/>
    <property type="project" value="UniProtKB-EC"/>
</dbReference>
<dbReference type="GO" id="GO:0046872">
    <property type="term" value="F:metal ion binding"/>
    <property type="evidence" value="ECO:0007669"/>
    <property type="project" value="UniProtKB-KW"/>
</dbReference>
<dbReference type="GO" id="GO:0000166">
    <property type="term" value="F:nucleotide binding"/>
    <property type="evidence" value="ECO:0007669"/>
    <property type="project" value="UniProtKB-KW"/>
</dbReference>
<dbReference type="GO" id="GO:0042853">
    <property type="term" value="P:L-alanine catabolic process"/>
    <property type="evidence" value="ECO:0007669"/>
    <property type="project" value="UniProtKB-UniPathway"/>
</dbReference>
<dbReference type="CDD" id="cd05305">
    <property type="entry name" value="L-AlaDH"/>
    <property type="match status" value="1"/>
</dbReference>
<dbReference type="FunFam" id="3.40.50.720:FF:000049">
    <property type="entry name" value="Alanine dehydrogenase"/>
    <property type="match status" value="1"/>
</dbReference>
<dbReference type="Gene3D" id="3.40.50.720">
    <property type="entry name" value="NAD(P)-binding Rossmann-like Domain"/>
    <property type="match status" value="2"/>
</dbReference>
<dbReference type="InterPro" id="IPR008141">
    <property type="entry name" value="Ala_DH"/>
</dbReference>
<dbReference type="InterPro" id="IPR008143">
    <property type="entry name" value="Ala_DH/PNT_CS2"/>
</dbReference>
<dbReference type="InterPro" id="IPR008142">
    <property type="entry name" value="AlaDH/PNT_CS1"/>
</dbReference>
<dbReference type="InterPro" id="IPR007886">
    <property type="entry name" value="AlaDH/PNT_N"/>
</dbReference>
<dbReference type="InterPro" id="IPR007698">
    <property type="entry name" value="AlaDH/PNT_NAD(H)-bd"/>
</dbReference>
<dbReference type="InterPro" id="IPR036291">
    <property type="entry name" value="NAD(P)-bd_dom_sf"/>
</dbReference>
<dbReference type="NCBIfam" id="TIGR00518">
    <property type="entry name" value="alaDH"/>
    <property type="match status" value="1"/>
</dbReference>
<dbReference type="PANTHER" id="PTHR42795">
    <property type="entry name" value="ALANINE DEHYDROGENASE"/>
    <property type="match status" value="1"/>
</dbReference>
<dbReference type="PANTHER" id="PTHR42795:SF1">
    <property type="entry name" value="ALANINE DEHYDROGENASE"/>
    <property type="match status" value="1"/>
</dbReference>
<dbReference type="Pfam" id="PF01262">
    <property type="entry name" value="AlaDh_PNT_C"/>
    <property type="match status" value="1"/>
</dbReference>
<dbReference type="Pfam" id="PF05222">
    <property type="entry name" value="AlaDh_PNT_N"/>
    <property type="match status" value="1"/>
</dbReference>
<dbReference type="PIRSF" id="PIRSF000183">
    <property type="entry name" value="Alanine_dh"/>
    <property type="match status" value="1"/>
</dbReference>
<dbReference type="SMART" id="SM01002">
    <property type="entry name" value="AlaDh_PNT_C"/>
    <property type="match status" value="1"/>
</dbReference>
<dbReference type="SMART" id="SM01003">
    <property type="entry name" value="AlaDh_PNT_N"/>
    <property type="match status" value="1"/>
</dbReference>
<dbReference type="SUPFAM" id="SSF52283">
    <property type="entry name" value="Formate/glycerate dehydrogenase catalytic domain-like"/>
    <property type="match status" value="1"/>
</dbReference>
<dbReference type="SUPFAM" id="SSF51735">
    <property type="entry name" value="NAD(P)-binding Rossmann-fold domains"/>
    <property type="match status" value="1"/>
</dbReference>
<dbReference type="PROSITE" id="PS00836">
    <property type="entry name" value="ALADH_PNT_1"/>
    <property type="match status" value="1"/>
</dbReference>
<dbReference type="PROSITE" id="PS00837">
    <property type="entry name" value="ALADH_PNT_2"/>
    <property type="match status" value="1"/>
</dbReference>
<feature type="chain" id="PRO_0000426807" description="Alanine dehydrogenase">
    <location>
        <begin position="1"/>
        <end position="371"/>
    </location>
</feature>
<feature type="active site" description="Proton donor/acceptor" evidence="1">
    <location>
        <position position="96"/>
    </location>
</feature>
<feature type="active site" description="Proton donor/acceptor" evidence="1">
    <location>
        <position position="270"/>
    </location>
</feature>
<feature type="binding site" evidence="1">
    <location>
        <position position="15"/>
    </location>
    <ligand>
        <name>substrate</name>
    </ligand>
</feature>
<feature type="binding site" evidence="1">
    <location>
        <position position="75"/>
    </location>
    <ligand>
        <name>substrate</name>
    </ligand>
</feature>
<feature type="binding site" evidence="1">
    <location>
        <position position="134"/>
    </location>
    <ligand>
        <name>NAD(+)</name>
        <dbReference type="ChEBI" id="CHEBI:57540"/>
    </ligand>
</feature>
<feature type="binding site" evidence="1">
    <location>
        <begin position="178"/>
        <end position="179"/>
    </location>
    <ligand>
        <name>NAD(+)</name>
        <dbReference type="ChEBI" id="CHEBI:57540"/>
    </ligand>
</feature>
<feature type="binding site" evidence="1">
    <location>
        <position position="198"/>
    </location>
    <ligand>
        <name>NAD(+)</name>
        <dbReference type="ChEBI" id="CHEBI:57540"/>
    </ligand>
</feature>
<feature type="binding site" evidence="1">
    <location>
        <position position="203"/>
    </location>
    <ligand>
        <name>NAD(+)</name>
        <dbReference type="ChEBI" id="CHEBI:57540"/>
    </ligand>
</feature>
<feature type="binding site" evidence="1">
    <location>
        <position position="220"/>
    </location>
    <ligand>
        <name>NAD(+)</name>
        <dbReference type="ChEBI" id="CHEBI:57540"/>
    </ligand>
</feature>
<feature type="binding site" evidence="1">
    <location>
        <begin position="239"/>
        <end position="240"/>
    </location>
    <ligand>
        <name>NAD(+)</name>
        <dbReference type="ChEBI" id="CHEBI:57540"/>
    </ligand>
</feature>
<feature type="binding site" evidence="1">
    <location>
        <begin position="267"/>
        <end position="270"/>
    </location>
    <ligand>
        <name>NAD(+)</name>
        <dbReference type="ChEBI" id="CHEBI:57540"/>
    </ligand>
</feature>
<feature type="binding site" evidence="1">
    <location>
        <position position="279"/>
    </location>
    <ligand>
        <name>NAD(+)</name>
        <dbReference type="ChEBI" id="CHEBI:57540"/>
    </ligand>
</feature>
<feature type="binding site" evidence="1">
    <location>
        <begin position="298"/>
        <end position="301"/>
    </location>
    <ligand>
        <name>NAD(+)</name>
        <dbReference type="ChEBI" id="CHEBI:57540"/>
    </ligand>
</feature>
<feature type="binding site" evidence="2">
    <location>
        <position position="323"/>
    </location>
    <ligand>
        <name>Mg(2+)</name>
        <dbReference type="ChEBI" id="CHEBI:18420"/>
    </ligand>
</feature>
<feature type="binding site" evidence="2">
    <location>
        <position position="327"/>
    </location>
    <ligand>
        <name>Mg(2+)</name>
        <dbReference type="ChEBI" id="CHEBI:18420"/>
    </ligand>
</feature>
<gene>
    <name type="primary">ald</name>
    <name type="ordered locus">MT2850</name>
</gene>
<organism>
    <name type="scientific">Mycobacterium tuberculosis (strain CDC 1551 / Oshkosh)</name>
    <dbReference type="NCBI Taxonomy" id="83331"/>
    <lineage>
        <taxon>Bacteria</taxon>
        <taxon>Bacillati</taxon>
        <taxon>Actinomycetota</taxon>
        <taxon>Actinomycetes</taxon>
        <taxon>Mycobacteriales</taxon>
        <taxon>Mycobacteriaceae</taxon>
        <taxon>Mycobacterium</taxon>
        <taxon>Mycobacterium tuberculosis complex</taxon>
    </lineage>
</organism>
<name>DHA_MYCTO</name>
<proteinExistence type="inferred from homology"/>
<evidence type="ECO:0000250" key="1"/>
<evidence type="ECO:0000250" key="2">
    <source>
        <dbReference type="UniProtKB" id="P9WQB1"/>
    </source>
</evidence>
<evidence type="ECO:0000305" key="3"/>
<sequence length="371" mass="38739">MRVGIPTETKNNEFRVAITPAGVAELTRRGHEVLIQAGAGEGSAITDADFKAAGAQLVGTADQVWADADLLLKVKEPIAAEYGRLRHGQILFTFLHLAASRACTDALLDSGTTSIAYETVQTPDGALPLLAPMSEVAGRLAAQVGAYHLMRTQGGRGVLMGGVPGVEPADVVVIGAGTAGYNAARIANGMGATVTVLDINIDKLRQLDAEFCGRIHTRYSSAYELEGAVKRADLVIGAVLVPGAKAPKLVSNSLVAHMKPGAVLVDIAIDQGGCFEGSRPTTYDHPTFAVHDTLFYCVANMPASVPKTSTYALTNATMPYVLELADHGWRAACRSNPALAKGLSTHEGALLSERVATDLGVPFTEPASVLA</sequence>
<protein>
    <recommendedName>
        <fullName>Alanine dehydrogenase</fullName>
        <ecNumber>1.4.1.1</ecNumber>
    </recommendedName>
    <alternativeName>
        <fullName>40 kDa antigen</fullName>
    </alternativeName>
    <alternativeName>
        <fullName>TB43</fullName>
    </alternativeName>
</protein>
<accession>P9WQB0</accession>
<accession>L0TC82</accession>
<accession>O33322</accession>
<accession>P30234</accession>
<reference key="1">
    <citation type="journal article" date="2002" name="J. Bacteriol.">
        <title>Whole-genome comparison of Mycobacterium tuberculosis clinical and laboratory strains.</title>
        <authorList>
            <person name="Fleischmann R.D."/>
            <person name="Alland D."/>
            <person name="Eisen J.A."/>
            <person name="Carpenter L."/>
            <person name="White O."/>
            <person name="Peterson J.D."/>
            <person name="DeBoy R.T."/>
            <person name="Dodson R.J."/>
            <person name="Gwinn M.L."/>
            <person name="Haft D.H."/>
            <person name="Hickey E.K."/>
            <person name="Kolonay J.F."/>
            <person name="Nelson W.C."/>
            <person name="Umayam L.A."/>
            <person name="Ermolaeva M.D."/>
            <person name="Salzberg S.L."/>
            <person name="Delcher A."/>
            <person name="Utterback T.R."/>
            <person name="Weidman J.F."/>
            <person name="Khouri H.M."/>
            <person name="Gill J."/>
            <person name="Mikula A."/>
            <person name="Bishai W."/>
            <person name="Jacobs W.R. Jr."/>
            <person name="Venter J.C."/>
            <person name="Fraser C.M."/>
        </authorList>
    </citation>
    <scope>NUCLEOTIDE SEQUENCE [LARGE SCALE GENOMIC DNA]</scope>
    <source>
        <strain>CDC 1551 / Oshkosh</strain>
    </source>
</reference>